<comment type="catalytic activity">
    <reaction>
        <text>an L-alpha-amino acid + O2 + H2O = a 2-oxocarboxylate + H2O2 + NH4(+)</text>
        <dbReference type="Rhea" id="RHEA:13781"/>
        <dbReference type="ChEBI" id="CHEBI:15377"/>
        <dbReference type="ChEBI" id="CHEBI:15379"/>
        <dbReference type="ChEBI" id="CHEBI:16240"/>
        <dbReference type="ChEBI" id="CHEBI:28938"/>
        <dbReference type="ChEBI" id="CHEBI:35179"/>
        <dbReference type="ChEBI" id="CHEBI:59869"/>
        <dbReference type="EC" id="1.4.3.2"/>
    </reaction>
</comment>
<comment type="cofactor">
    <cofactor>
        <name>FAD</name>
        <dbReference type="ChEBI" id="CHEBI:57692"/>
    </cofactor>
</comment>
<comment type="induction">
    <text>By addition of L-amino acids after nitrogen starvation, by starvation in phosphate buffer and by the addition of protein synthesis inhibitors, D-amino acids, or ATP.</text>
</comment>
<comment type="similarity">
    <text evidence="2">Belongs to the flavin monoamine oxidase family.</text>
</comment>
<protein>
    <recommendedName>
        <fullName>L-amino-acid oxidase</fullName>
        <shortName>LAAO</shortName>
        <shortName>LAO</shortName>
        <ecNumber>1.4.3.2</ecNumber>
    </recommendedName>
</protein>
<name>OXLA_NEUCR</name>
<keyword id="KW-0903">Direct protein sequencing</keyword>
<keyword id="KW-0274">FAD</keyword>
<keyword id="KW-0285">Flavoprotein</keyword>
<keyword id="KW-0560">Oxidoreductase</keyword>
<keyword id="KW-1185">Reference proteome</keyword>
<keyword id="KW-0865">Zymogen</keyword>
<proteinExistence type="evidence at protein level"/>
<feature type="propeptide" id="PRO_0000001708">
    <location>
        <begin position="1"/>
        <end position="130"/>
    </location>
</feature>
<feature type="chain" id="PRO_0000001709" description="L-amino-acid oxidase">
    <location>
        <begin position="131"/>
        <end position="696"/>
    </location>
</feature>
<feature type="binding site" evidence="1">
    <location>
        <position position="207"/>
    </location>
    <ligand>
        <name>FAD</name>
        <dbReference type="ChEBI" id="CHEBI:57692"/>
    </ligand>
</feature>
<feature type="binding site" evidence="1">
    <location>
        <position position="215"/>
    </location>
    <ligand>
        <name>FAD</name>
        <dbReference type="ChEBI" id="CHEBI:57692"/>
    </ligand>
</feature>
<feature type="binding site" evidence="1">
    <location>
        <begin position="236"/>
        <end position="237"/>
    </location>
    <ligand>
        <name>FAD</name>
        <dbReference type="ChEBI" id="CHEBI:57692"/>
    </ligand>
</feature>
<feature type="binding site" evidence="1">
    <location>
        <position position="237"/>
    </location>
    <ligand>
        <name>substrate</name>
    </ligand>
</feature>
<feature type="binding site" evidence="1">
    <location>
        <position position="440"/>
    </location>
    <ligand>
        <name>FAD</name>
        <dbReference type="ChEBI" id="CHEBI:57692"/>
    </ligand>
</feature>
<feature type="binding site" evidence="1">
    <location>
        <position position="564"/>
    </location>
    <ligand>
        <name>substrate</name>
    </ligand>
</feature>
<feature type="binding site" evidence="1">
    <location>
        <position position="649"/>
    </location>
    <ligand>
        <name>FAD</name>
        <dbReference type="ChEBI" id="CHEBI:57692"/>
    </ligand>
</feature>
<feature type="binding site" evidence="1">
    <location>
        <begin position="658"/>
        <end position="661"/>
    </location>
    <ligand>
        <name>FAD</name>
        <dbReference type="ChEBI" id="CHEBI:57692"/>
    </ligand>
</feature>
<feature type="sequence conflict" description="In Ref. 1; AA sequence." evidence="2" ref="1">
    <original>AAGAALLA</original>
    <variation>RGCGTAR</variation>
    <location>
        <begin position="6"/>
        <end position="13"/>
    </location>
</feature>
<feature type="sequence conflict" description="In Ref. 1; AA sequence." evidence="2" ref="1">
    <original>I</original>
    <variation>L</variation>
    <location>
        <position position="53"/>
    </location>
</feature>
<feature type="sequence conflict" description="In Ref. 1; AA sequence." evidence="2" ref="1">
    <original>F</original>
    <variation>L</variation>
    <location>
        <position position="343"/>
    </location>
</feature>
<feature type="sequence conflict" description="In Ref. 1; AA sequence." evidence="2" ref="1">
    <original>SASAHSYWDTLYEGMYFSASTWKT</original>
    <variation>APALTRTGTRCTKGCTFPRRRGA</variation>
    <location>
        <begin position="391"/>
        <end position="414"/>
    </location>
</feature>
<feature type="sequence conflict" description="In Ref. 1; AA sequence." evidence="2" ref="1">
    <original>V</original>
    <variation>L</variation>
    <location>
        <position position="440"/>
    </location>
</feature>
<feature type="sequence conflict" description="In Ref. 1; AA sequence." evidence="2" ref="1">
    <original>AT</original>
    <variation>GRP</variation>
    <location>
        <begin position="684"/>
        <end position="685"/>
    </location>
</feature>
<sequence>MKWSAAAGAALLALPANSAVTASLPLKLETRSSLNSRLSNIHVERSASVEGAISYTYGSCQAKREEEAHHSISQPTDAHHDRLVWVIPENVQSGGCISAWSRANGRLVGRSRPQSFDFKSIKMRRDLKARATKPSDSVAIHMTTDNGINPWGPWFDGVKLLEDKEISTVDVEKAKSKNIAIVGAGMSGLMTYLCLTQAGMTNVSIIEGGNRLGGRVHTEYLSGGPFDYSYQEMGPMRFPNTITLGNETYNVSDHQLVFQLAEEMNSLNGHSKNLSVDFIPWYQSNSNGLYYYDGIKNPETGLPPTLAELAANSSLALTRVSNNSTKSLSQKVDAFLPDTDKFFAEMAQNMFKAHADWLSGGLAGLPGDQWSEFGFMVNYLRGSLNDTAFLSASAHSYWDTLYEGMYFSASTWKTIDGGLNRLPLSFHPLVDNATTLNRRVERVAFDAETQKVTLHSRNSYKDSFESSEHDYAVIAAPFSIVKKWRFSPALDLTAPTLANAIQNLEYTSACKVALEFRTRFWEHLPQPIYGSCSTTSDIPGIGSICYPSYNINGTDGPASILASYISGADWGDRWVSTPEEEHVQYVLNAMAEIHGEELVKEQYTGQFNRRCWALDPLESASWASPTVGQHELYLPEYFQTRNNLVFVGEHTSYTHAWIASALESGIRGSVQLLLELGLVDEAKATVDKWMARWIDV</sequence>
<evidence type="ECO:0000250" key="1"/>
<evidence type="ECO:0000305" key="2"/>
<accession>P23623</accession>
<accession>Q7RVE5</accession>
<accession>Q8X0D4</accession>
<organism>
    <name type="scientific">Neurospora crassa (strain ATCC 24698 / 74-OR23-1A / CBS 708.71 / DSM 1257 / FGSC 987)</name>
    <dbReference type="NCBI Taxonomy" id="367110"/>
    <lineage>
        <taxon>Eukaryota</taxon>
        <taxon>Fungi</taxon>
        <taxon>Dikarya</taxon>
        <taxon>Ascomycota</taxon>
        <taxon>Pezizomycotina</taxon>
        <taxon>Sordariomycetes</taxon>
        <taxon>Sordariomycetidae</taxon>
        <taxon>Sordariales</taxon>
        <taxon>Sordariaceae</taxon>
        <taxon>Neurospora</taxon>
    </lineage>
</organism>
<reference key="1">
    <citation type="journal article" date="1990" name="J. Biol. Chem.">
        <title>Molecular cloning of the L-amino-acid oxidase gene from Neurospora crassa.</title>
        <authorList>
            <person name="Niedermann D.M."/>
            <person name="Lerch K."/>
        </authorList>
    </citation>
    <scope>NUCLEOTIDE SEQUENCE [GENOMIC DNA]</scope>
    <scope>PARTIAL PROTEIN SEQUENCE</scope>
    <source>
        <strain>ATCC 24698 / 74-OR23-1A / CBS 708.71 / DSM 1257 / FGSC 987</strain>
    </source>
</reference>
<reference key="2">
    <citation type="journal article" date="2003" name="Nucleic Acids Res.">
        <title>What's in the genome of a filamentous fungus? Analysis of the Neurospora genome sequence.</title>
        <authorList>
            <person name="Mannhaupt G."/>
            <person name="Montrone C."/>
            <person name="Haase D."/>
            <person name="Mewes H.-W."/>
            <person name="Aign V."/>
            <person name="Hoheisel J.D."/>
            <person name="Fartmann B."/>
            <person name="Nyakatura G."/>
            <person name="Kempken F."/>
            <person name="Maier J."/>
            <person name="Schulte U."/>
        </authorList>
    </citation>
    <scope>NUCLEOTIDE SEQUENCE [LARGE SCALE GENOMIC DNA]</scope>
    <source>
        <strain>ATCC 24698 / 74-OR23-1A / CBS 708.71 / DSM 1257 / FGSC 987</strain>
    </source>
</reference>
<reference key="3">
    <citation type="journal article" date="2003" name="Nature">
        <title>The genome sequence of the filamentous fungus Neurospora crassa.</title>
        <authorList>
            <person name="Galagan J.E."/>
            <person name="Calvo S.E."/>
            <person name="Borkovich K.A."/>
            <person name="Selker E.U."/>
            <person name="Read N.D."/>
            <person name="Jaffe D.B."/>
            <person name="FitzHugh W."/>
            <person name="Ma L.-J."/>
            <person name="Smirnov S."/>
            <person name="Purcell S."/>
            <person name="Rehman B."/>
            <person name="Elkins T."/>
            <person name="Engels R."/>
            <person name="Wang S."/>
            <person name="Nielsen C.B."/>
            <person name="Butler J."/>
            <person name="Endrizzi M."/>
            <person name="Qui D."/>
            <person name="Ianakiev P."/>
            <person name="Bell-Pedersen D."/>
            <person name="Nelson M.A."/>
            <person name="Werner-Washburne M."/>
            <person name="Selitrennikoff C.P."/>
            <person name="Kinsey J.A."/>
            <person name="Braun E.L."/>
            <person name="Zelter A."/>
            <person name="Schulte U."/>
            <person name="Kothe G.O."/>
            <person name="Jedd G."/>
            <person name="Mewes H.-W."/>
            <person name="Staben C."/>
            <person name="Marcotte E."/>
            <person name="Greenberg D."/>
            <person name="Roy A."/>
            <person name="Foley K."/>
            <person name="Naylor J."/>
            <person name="Stange-Thomann N."/>
            <person name="Barrett R."/>
            <person name="Gnerre S."/>
            <person name="Kamal M."/>
            <person name="Kamvysselis M."/>
            <person name="Mauceli E.W."/>
            <person name="Bielke C."/>
            <person name="Rudd S."/>
            <person name="Frishman D."/>
            <person name="Krystofova S."/>
            <person name="Rasmussen C."/>
            <person name="Metzenberg R.L."/>
            <person name="Perkins D.D."/>
            <person name="Kroken S."/>
            <person name="Cogoni C."/>
            <person name="Macino G."/>
            <person name="Catcheside D.E.A."/>
            <person name="Li W."/>
            <person name="Pratt R.J."/>
            <person name="Osmani S.A."/>
            <person name="DeSouza C.P.C."/>
            <person name="Glass N.L."/>
            <person name="Orbach M.J."/>
            <person name="Berglund J.A."/>
            <person name="Voelker R."/>
            <person name="Yarden O."/>
            <person name="Plamann M."/>
            <person name="Seiler S."/>
            <person name="Dunlap J.C."/>
            <person name="Radford A."/>
            <person name="Aramayo R."/>
            <person name="Natvig D.O."/>
            <person name="Alex L.A."/>
            <person name="Mannhaupt G."/>
            <person name="Ebbole D.J."/>
            <person name="Freitag M."/>
            <person name="Paulsen I."/>
            <person name="Sachs M.S."/>
            <person name="Lander E.S."/>
            <person name="Nusbaum C."/>
            <person name="Birren B.W."/>
        </authorList>
    </citation>
    <scope>NUCLEOTIDE SEQUENCE [LARGE SCALE GENOMIC DNA]</scope>
    <source>
        <strain>ATCC 24698 / 74-OR23-1A / CBS 708.71 / DSM 1257 / FGSC 987</strain>
    </source>
</reference>
<dbReference type="EC" id="1.4.3.2"/>
<dbReference type="EMBL" id="AL670007">
    <property type="protein sequence ID" value="CAD21325.1"/>
    <property type="molecule type" value="Genomic_DNA"/>
</dbReference>
<dbReference type="EMBL" id="CM002240">
    <property type="protein sequence ID" value="EAA32442.1"/>
    <property type="molecule type" value="Genomic_DNA"/>
</dbReference>
<dbReference type="PIR" id="A38314">
    <property type="entry name" value="A38314"/>
</dbReference>
<dbReference type="RefSeq" id="XP_961678.1">
    <property type="nucleotide sequence ID" value="XM_956585.2"/>
</dbReference>
<dbReference type="SMR" id="P23623"/>
<dbReference type="STRING" id="367110.P23623"/>
<dbReference type="PaxDb" id="5141-EFNCRP00000004415"/>
<dbReference type="EnsemblFungi" id="EAA32442">
    <property type="protein sequence ID" value="EAA32442"/>
    <property type="gene ID" value="NCU01066"/>
</dbReference>
<dbReference type="GeneID" id="3877869"/>
<dbReference type="KEGG" id="ncr:NCU01066"/>
<dbReference type="VEuPathDB" id="FungiDB:NCU01066"/>
<dbReference type="HOGENOM" id="CLU_004498_8_2_1"/>
<dbReference type="InParanoid" id="P23623"/>
<dbReference type="OMA" id="NCSHLMS"/>
<dbReference type="OrthoDB" id="7777654at2759"/>
<dbReference type="Proteomes" id="UP000001805">
    <property type="component" value="Chromosome 2, Linkage Group V"/>
</dbReference>
<dbReference type="GO" id="GO:0001716">
    <property type="term" value="F:L-amino-acid oxidase activity"/>
    <property type="evidence" value="ECO:0000318"/>
    <property type="project" value="GO_Central"/>
</dbReference>
<dbReference type="GO" id="GO:0009063">
    <property type="term" value="P:amino acid catabolic process"/>
    <property type="evidence" value="ECO:0000318"/>
    <property type="project" value="GO_Central"/>
</dbReference>
<dbReference type="FunFam" id="1.20.1440.240:FF:000003">
    <property type="entry name" value="WGS project CABT00000000 data, contig 2.11"/>
    <property type="match status" value="1"/>
</dbReference>
<dbReference type="Gene3D" id="1.20.1440.240">
    <property type="match status" value="1"/>
</dbReference>
<dbReference type="Gene3D" id="3.90.660.10">
    <property type="match status" value="1"/>
</dbReference>
<dbReference type="Gene3D" id="3.50.50.60">
    <property type="entry name" value="FAD/NAD(P)-binding domain"/>
    <property type="match status" value="1"/>
</dbReference>
<dbReference type="InterPro" id="IPR002937">
    <property type="entry name" value="Amino_oxidase"/>
</dbReference>
<dbReference type="InterPro" id="IPR036188">
    <property type="entry name" value="FAD/NAD-bd_sf"/>
</dbReference>
<dbReference type="InterPro" id="IPR050281">
    <property type="entry name" value="Flavin_monoamine_oxidase"/>
</dbReference>
<dbReference type="PANTHER" id="PTHR10742:SF382">
    <property type="entry name" value="AMINE OXIDASE DOMAIN-CONTAINING PROTEIN"/>
    <property type="match status" value="1"/>
</dbReference>
<dbReference type="PANTHER" id="PTHR10742">
    <property type="entry name" value="FLAVIN MONOAMINE OXIDASE"/>
    <property type="match status" value="1"/>
</dbReference>
<dbReference type="Pfam" id="PF01593">
    <property type="entry name" value="Amino_oxidase"/>
    <property type="match status" value="1"/>
</dbReference>
<dbReference type="SUPFAM" id="SSF54373">
    <property type="entry name" value="FAD-linked reductases, C-terminal domain"/>
    <property type="match status" value="1"/>
</dbReference>
<dbReference type="SUPFAM" id="SSF51905">
    <property type="entry name" value="FAD/NAD(P)-binding domain"/>
    <property type="match status" value="1"/>
</dbReference>
<gene>
    <name type="primary">lox</name>
    <name type="ORF">B14A6.230</name>
    <name type="ORF">NCU01066</name>
</gene>